<name>TLE3_HUMAN</name>
<dbReference type="EMBL" id="M99438">
    <property type="protein sequence ID" value="AAA61194.1"/>
    <property type="molecule type" value="mRNA"/>
</dbReference>
<dbReference type="EMBL" id="AB046767">
    <property type="protein sequence ID" value="BAB13373.1"/>
    <property type="status" value="ALT_INIT"/>
    <property type="molecule type" value="mRNA"/>
</dbReference>
<dbReference type="EMBL" id="AK315058">
    <property type="status" value="NOT_ANNOTATED_CDS"/>
    <property type="molecule type" value="mRNA"/>
</dbReference>
<dbReference type="EMBL" id="AK298482">
    <property type="protein sequence ID" value="BAG60692.1"/>
    <property type="molecule type" value="mRNA"/>
</dbReference>
<dbReference type="EMBL" id="AC026583">
    <property type="status" value="NOT_ANNOTATED_CDS"/>
    <property type="molecule type" value="Genomic_DNA"/>
</dbReference>
<dbReference type="EMBL" id="AC068327">
    <property type="status" value="NOT_ANNOTATED_CDS"/>
    <property type="molecule type" value="Genomic_DNA"/>
</dbReference>
<dbReference type="EMBL" id="BC015729">
    <property type="status" value="NOT_ANNOTATED_CDS"/>
    <property type="molecule type" value="mRNA"/>
</dbReference>
<dbReference type="EMBL" id="BC041831">
    <property type="protein sequence ID" value="AAH41831.1"/>
    <property type="molecule type" value="mRNA"/>
</dbReference>
<dbReference type="EMBL" id="BC043247">
    <property type="protein sequence ID" value="AAH43247.1"/>
    <property type="molecule type" value="mRNA"/>
</dbReference>
<dbReference type="CCDS" id="CCDS45293.1">
    <molecule id="Q04726-1"/>
</dbReference>
<dbReference type="CCDS" id="CCDS45294.1">
    <molecule id="Q04726-5"/>
</dbReference>
<dbReference type="CCDS" id="CCDS58375.1">
    <molecule id="Q04726-2"/>
</dbReference>
<dbReference type="CCDS" id="CCDS61689.1">
    <molecule id="Q04726-7"/>
</dbReference>
<dbReference type="CCDS" id="CCDS61691.1">
    <molecule id="Q04726-6"/>
</dbReference>
<dbReference type="CCDS" id="CCDS61692.1">
    <molecule id="Q04726-3"/>
</dbReference>
<dbReference type="PIR" id="D56695">
    <property type="entry name" value="D56695"/>
</dbReference>
<dbReference type="RefSeq" id="NP_001098662.1">
    <molecule id="Q04726-5"/>
    <property type="nucleotide sequence ID" value="NM_001105192.3"/>
</dbReference>
<dbReference type="RefSeq" id="NP_001269908.1">
    <molecule id="Q04726-3"/>
    <property type="nucleotide sequence ID" value="NM_001282979.2"/>
</dbReference>
<dbReference type="RefSeq" id="NP_001269909.1">
    <molecule id="Q04726-6"/>
    <property type="nucleotide sequence ID" value="NM_001282980.2"/>
</dbReference>
<dbReference type="RefSeq" id="NP_001269910.1">
    <molecule id="Q04726-7"/>
    <property type="nucleotide sequence ID" value="NM_001282981.2"/>
</dbReference>
<dbReference type="RefSeq" id="NP_001269911.1">
    <property type="nucleotide sequence ID" value="NM_001282982.1"/>
</dbReference>
<dbReference type="RefSeq" id="NP_005069.2">
    <molecule id="Q04726-1"/>
    <property type="nucleotide sequence ID" value="NM_005078.4"/>
</dbReference>
<dbReference type="RefSeq" id="NP_065959.1">
    <molecule id="Q04726-2"/>
    <property type="nucleotide sequence ID" value="NM_020908.3"/>
</dbReference>
<dbReference type="SMR" id="Q04726"/>
<dbReference type="BioGRID" id="112945">
    <property type="interactions" value="384"/>
</dbReference>
<dbReference type="CORUM" id="Q04726"/>
<dbReference type="DIP" id="DIP-36666N"/>
<dbReference type="FunCoup" id="Q04726">
    <property type="interactions" value="2424"/>
</dbReference>
<dbReference type="IntAct" id="Q04726">
    <property type="interactions" value="101"/>
</dbReference>
<dbReference type="MINT" id="Q04726"/>
<dbReference type="STRING" id="9606.ENSP00000452871"/>
<dbReference type="GlyCosmos" id="Q04726">
    <property type="glycosylation" value="4 sites, 1 glycan"/>
</dbReference>
<dbReference type="GlyGen" id="Q04726">
    <property type="glycosylation" value="13 sites, 1 O-linked glycan (12 sites)"/>
</dbReference>
<dbReference type="iPTMnet" id="Q04726"/>
<dbReference type="PhosphoSitePlus" id="Q04726"/>
<dbReference type="BioMuta" id="TLE3"/>
<dbReference type="DMDM" id="20532417"/>
<dbReference type="jPOST" id="Q04726"/>
<dbReference type="MassIVE" id="Q04726"/>
<dbReference type="PaxDb" id="9606-ENSP00000452871"/>
<dbReference type="PeptideAtlas" id="Q04726"/>
<dbReference type="ProteomicsDB" id="19592"/>
<dbReference type="ProteomicsDB" id="30271"/>
<dbReference type="ProteomicsDB" id="58268">
    <molecule id="Q04726-1"/>
</dbReference>
<dbReference type="ProteomicsDB" id="58269">
    <molecule id="Q04726-2"/>
</dbReference>
<dbReference type="ProteomicsDB" id="58270">
    <molecule id="Q04726-3"/>
</dbReference>
<dbReference type="ProteomicsDB" id="58271">
    <molecule id="Q04726-4"/>
</dbReference>
<dbReference type="ProteomicsDB" id="67140"/>
<dbReference type="Pumba" id="Q04726"/>
<dbReference type="Antibodypedia" id="7320">
    <property type="antibodies" value="101 antibodies from 27 providers"/>
</dbReference>
<dbReference type="DNASU" id="7090"/>
<dbReference type="Ensembl" id="ENST00000317509.12">
    <molecule id="Q04726-2"/>
    <property type="protein sequence ID" value="ENSP00000319233.8"/>
    <property type="gene ID" value="ENSG00000140332.18"/>
</dbReference>
<dbReference type="Ensembl" id="ENST00000440567.7">
    <molecule id="Q04726-7"/>
    <property type="protein sequence ID" value="ENSP00000415057.3"/>
    <property type="gene ID" value="ENSG00000140332.18"/>
</dbReference>
<dbReference type="Ensembl" id="ENST00000451782.7">
    <molecule id="Q04726-5"/>
    <property type="protein sequence ID" value="ENSP00000394717.3"/>
    <property type="gene ID" value="ENSG00000140332.18"/>
</dbReference>
<dbReference type="Ensembl" id="ENST00000557907.5">
    <molecule id="Q04726-3"/>
    <property type="protein sequence ID" value="ENSP00000453107.1"/>
    <property type="gene ID" value="ENSG00000140332.18"/>
</dbReference>
<dbReference type="Ensembl" id="ENST00000557997.5">
    <molecule id="Q04726-3"/>
    <property type="protein sequence ID" value="ENSP00000453083.1"/>
    <property type="gene ID" value="ENSG00000140332.18"/>
</dbReference>
<dbReference type="Ensembl" id="ENST00000558379.5">
    <molecule id="Q04726-6"/>
    <property type="protein sequence ID" value="ENSP00000453435.1"/>
    <property type="gene ID" value="ENSG00000140332.18"/>
</dbReference>
<dbReference type="Ensembl" id="ENST00000558939.5">
    <molecule id="Q04726-1"/>
    <property type="protein sequence ID" value="ENSP00000452871.1"/>
    <property type="gene ID" value="ENSG00000140332.18"/>
</dbReference>
<dbReference type="Ensembl" id="ENST00000559048.5">
    <molecule id="Q04726-4"/>
    <property type="protein sequence ID" value="ENSP00000453760.1"/>
    <property type="gene ID" value="ENSG00000140332.18"/>
</dbReference>
<dbReference type="GeneID" id="7090"/>
<dbReference type="KEGG" id="hsa:7090"/>
<dbReference type="MANE-Select" id="ENST00000451782.7">
    <molecule id="Q04726-5"/>
    <property type="protein sequence ID" value="ENSP00000394717.3"/>
    <property type="RefSeq nucleotide sequence ID" value="NM_001105192.3"/>
    <property type="RefSeq protein sequence ID" value="NP_001098662.1"/>
</dbReference>
<dbReference type="UCSC" id="uc002asl.4">
    <molecule id="Q04726-1"/>
    <property type="organism name" value="human"/>
</dbReference>
<dbReference type="AGR" id="HGNC:11839"/>
<dbReference type="CTD" id="7090"/>
<dbReference type="DisGeNET" id="7090"/>
<dbReference type="GeneCards" id="TLE3"/>
<dbReference type="HGNC" id="HGNC:11839">
    <property type="gene designation" value="TLE3"/>
</dbReference>
<dbReference type="HPA" id="ENSG00000140332">
    <property type="expression patterns" value="Tissue enhanced (bone)"/>
</dbReference>
<dbReference type="MIM" id="600190">
    <property type="type" value="gene"/>
</dbReference>
<dbReference type="neXtProt" id="NX_Q04726"/>
<dbReference type="OpenTargets" id="ENSG00000140332"/>
<dbReference type="PharmGKB" id="PA36541"/>
<dbReference type="VEuPathDB" id="HostDB:ENSG00000140332"/>
<dbReference type="eggNOG" id="KOG0639">
    <property type="taxonomic scope" value="Eukaryota"/>
</dbReference>
<dbReference type="GeneTree" id="ENSGT01030000234519"/>
<dbReference type="HOGENOM" id="CLU_007612_3_0_1"/>
<dbReference type="InParanoid" id="Q04726"/>
<dbReference type="OMA" id="LTPDANW"/>
<dbReference type="OrthoDB" id="2624652at2759"/>
<dbReference type="PAN-GO" id="Q04726">
    <property type="GO annotations" value="4 GO annotations based on evolutionary models"/>
</dbReference>
<dbReference type="PhylomeDB" id="Q04726"/>
<dbReference type="TreeFam" id="TF314167"/>
<dbReference type="PathwayCommons" id="Q04726"/>
<dbReference type="Reactome" id="R-HSA-201722">
    <property type="pathway name" value="Formation of the beta-catenin:TCF transactivating complex"/>
</dbReference>
<dbReference type="Reactome" id="R-HSA-2122947">
    <molecule id="Q04726-3"/>
    <property type="pathway name" value="NOTCH1 Intracellular Domain Regulates Transcription"/>
</dbReference>
<dbReference type="Reactome" id="R-HSA-3769402">
    <property type="pathway name" value="Deactivation of the beta-catenin transactivating complex"/>
</dbReference>
<dbReference type="Reactome" id="R-HSA-4641265">
    <property type="pathway name" value="Repression of WNT target genes"/>
</dbReference>
<dbReference type="Reactome" id="R-HSA-9018519">
    <property type="pathway name" value="Estrogen-dependent gene expression"/>
</dbReference>
<dbReference type="SignaLink" id="Q04726"/>
<dbReference type="SIGNOR" id="Q04726"/>
<dbReference type="BioGRID-ORCS" id="7090">
    <property type="hits" value="42 hits in 1176 CRISPR screens"/>
</dbReference>
<dbReference type="CD-CODE" id="62EA6512">
    <property type="entry name" value="Sam68 nuclear body"/>
</dbReference>
<dbReference type="ChiTaRS" id="TLE3">
    <property type="organism name" value="human"/>
</dbReference>
<dbReference type="GeneWiki" id="TLE3"/>
<dbReference type="GenomeRNAi" id="7090"/>
<dbReference type="Pharos" id="Q04726">
    <property type="development level" value="Tbio"/>
</dbReference>
<dbReference type="PRO" id="PR:Q04726"/>
<dbReference type="Proteomes" id="UP000005640">
    <property type="component" value="Chromosome 15"/>
</dbReference>
<dbReference type="RNAct" id="Q04726">
    <property type="molecule type" value="protein"/>
</dbReference>
<dbReference type="Bgee" id="ENSG00000140332">
    <property type="expression patterns" value="Expressed in blood and 165 other cell types or tissues"/>
</dbReference>
<dbReference type="ExpressionAtlas" id="Q04726">
    <property type="expression patterns" value="baseline and differential"/>
</dbReference>
<dbReference type="GO" id="GO:1990907">
    <property type="term" value="C:beta-catenin-TCF complex"/>
    <property type="evidence" value="ECO:0000314"/>
    <property type="project" value="FlyBase"/>
</dbReference>
<dbReference type="GO" id="GO:0005654">
    <property type="term" value="C:nucleoplasm"/>
    <property type="evidence" value="ECO:0000314"/>
    <property type="project" value="HPA"/>
</dbReference>
<dbReference type="GO" id="GO:0005634">
    <property type="term" value="C:nucleus"/>
    <property type="evidence" value="ECO:0000314"/>
    <property type="project" value="UniProtKB"/>
</dbReference>
<dbReference type="GO" id="GO:0005667">
    <property type="term" value="C:transcription regulator complex"/>
    <property type="evidence" value="ECO:0000318"/>
    <property type="project" value="GO_Central"/>
</dbReference>
<dbReference type="GO" id="GO:0003714">
    <property type="term" value="F:transcription corepressor activity"/>
    <property type="evidence" value="ECO:0000318"/>
    <property type="project" value="GO_Central"/>
</dbReference>
<dbReference type="GO" id="GO:0009887">
    <property type="term" value="P:animal organ morphogenesis"/>
    <property type="evidence" value="ECO:0000304"/>
    <property type="project" value="ProtInc"/>
</dbReference>
<dbReference type="GO" id="GO:0090090">
    <property type="term" value="P:negative regulation of canonical Wnt signaling pathway"/>
    <property type="evidence" value="ECO:0000318"/>
    <property type="project" value="GO_Central"/>
</dbReference>
<dbReference type="GO" id="GO:0120163">
    <property type="term" value="P:negative regulation of cold-induced thermogenesis"/>
    <property type="evidence" value="ECO:0000250"/>
    <property type="project" value="YuBioLab"/>
</dbReference>
<dbReference type="GO" id="GO:0007165">
    <property type="term" value="P:signal transduction"/>
    <property type="evidence" value="ECO:0000304"/>
    <property type="project" value="ProtInc"/>
</dbReference>
<dbReference type="GO" id="GO:0016055">
    <property type="term" value="P:Wnt signaling pathway"/>
    <property type="evidence" value="ECO:0007669"/>
    <property type="project" value="UniProtKB-KW"/>
</dbReference>
<dbReference type="CDD" id="cd00200">
    <property type="entry name" value="WD40"/>
    <property type="match status" value="1"/>
</dbReference>
<dbReference type="FunFam" id="2.130.10.10:FF:000001">
    <property type="entry name" value="transducin-like enhancer protein 3 isoform X1"/>
    <property type="match status" value="1"/>
</dbReference>
<dbReference type="Gene3D" id="2.130.10.10">
    <property type="entry name" value="YVTN repeat-like/Quinoprotein amine dehydrogenase"/>
    <property type="match status" value="1"/>
</dbReference>
<dbReference type="InterPro" id="IPR005617">
    <property type="entry name" value="Groucho/TLE_N"/>
</dbReference>
<dbReference type="InterPro" id="IPR009146">
    <property type="entry name" value="Groucho_enhance"/>
</dbReference>
<dbReference type="InterPro" id="IPR015943">
    <property type="entry name" value="WD40/YVTN_repeat-like_dom_sf"/>
</dbReference>
<dbReference type="InterPro" id="IPR019775">
    <property type="entry name" value="WD40_repeat_CS"/>
</dbReference>
<dbReference type="InterPro" id="IPR036322">
    <property type="entry name" value="WD40_repeat_dom_sf"/>
</dbReference>
<dbReference type="InterPro" id="IPR001680">
    <property type="entry name" value="WD40_rpt"/>
</dbReference>
<dbReference type="PANTHER" id="PTHR10814">
    <property type="entry name" value="TRANSDUCIN-LIKE ENHANCER PROTEIN"/>
    <property type="match status" value="1"/>
</dbReference>
<dbReference type="PANTHER" id="PTHR10814:SF24">
    <property type="entry name" value="TRANSDUCIN-LIKE ENHANCER PROTEIN 3"/>
    <property type="match status" value="1"/>
</dbReference>
<dbReference type="Pfam" id="PF03920">
    <property type="entry name" value="TLE_N"/>
    <property type="match status" value="1"/>
</dbReference>
<dbReference type="Pfam" id="PF00400">
    <property type="entry name" value="WD40"/>
    <property type="match status" value="6"/>
</dbReference>
<dbReference type="PRINTS" id="PR01850">
    <property type="entry name" value="GROUCHOFAMLY"/>
</dbReference>
<dbReference type="SMART" id="SM00320">
    <property type="entry name" value="WD40"/>
    <property type="match status" value="7"/>
</dbReference>
<dbReference type="SUPFAM" id="SSF50978">
    <property type="entry name" value="WD40 repeat-like"/>
    <property type="match status" value="1"/>
</dbReference>
<dbReference type="PROSITE" id="PS00678">
    <property type="entry name" value="WD_REPEATS_1"/>
    <property type="match status" value="2"/>
</dbReference>
<dbReference type="PROSITE" id="PS50082">
    <property type="entry name" value="WD_REPEATS_2"/>
    <property type="match status" value="2"/>
</dbReference>
<dbReference type="PROSITE" id="PS50294">
    <property type="entry name" value="WD_REPEATS_REGION"/>
    <property type="match status" value="2"/>
</dbReference>
<proteinExistence type="evidence at protein level"/>
<sequence length="772" mass="83417">MYPQGRHPAPHQPGQPGFKFTVAESCDRIKDEFQFLQAQYHSLKVEYDKLANEKTEMQRHYVMYYEMSYGLNIEMHKQTEIAKRLNTILAQIMPFLSQEHQQQVAQAVERAKQVTMTELNAIIGQQQLQAQHLSHATHGPPVQLPPHPSGLQPPGIPPVTGSSSGLLALGALGSQAHLTVKDEKNHHELDHRERESSANNSVSPSESLRASEKHRGSADYSMEAKKRKAEEKDSLSRYDSDGDKSDDLVVDVSNEDPATPRVSPAHSPPENGLDKARSLKKDAPTSPASVASSSSTPSSKTKDLGHNDKSSTPGLKSNTPTPRNDAPTPGTSTTPGLRSMPGKPPGMDPIGIMASALRTPISITSSYAAPFAMMSHHEMNGSLTSPGAYAGLHNIPPQMSAAAAAAAAAYGRSPMVSFGAVGFDPHPPMRATGLPSSLASIPGGKPAYSFHVSADGQMQPVPFPHDALAGPGIPRHARQINTLSHGEVVCAVTISNPTRHVYTGGKGCVKIWDISQPGSKSPISQLDCLNRDNYIRSCKLLPDGRTLIVGGEASTLTIWDLASPTPRIKAELTSSAPACYALAISPDAKVCFSCCSDGNIAVWDLHNQTLVRQFQGHTDGASCIDISHDGTKLWTGGLDNTVRSWDLREGRQLQQHDFTSQIFSLGYCPTGEWLAVGMESSNVEVLHHTKPDKYQLHLHESCVLSLKFAYCGKWFVSTGKDNLLNAWRTPYGASIFQSKESSSVLSCDISADDKYIVTGSGDKKATVYEVIY</sequence>
<organism>
    <name type="scientific">Homo sapiens</name>
    <name type="common">Human</name>
    <dbReference type="NCBI Taxonomy" id="9606"/>
    <lineage>
        <taxon>Eukaryota</taxon>
        <taxon>Metazoa</taxon>
        <taxon>Chordata</taxon>
        <taxon>Craniata</taxon>
        <taxon>Vertebrata</taxon>
        <taxon>Euteleostomi</taxon>
        <taxon>Mammalia</taxon>
        <taxon>Eutheria</taxon>
        <taxon>Euarchontoglires</taxon>
        <taxon>Primates</taxon>
        <taxon>Haplorrhini</taxon>
        <taxon>Catarrhini</taxon>
        <taxon>Hominidae</taxon>
        <taxon>Homo</taxon>
    </lineage>
</organism>
<protein>
    <recommendedName>
        <fullName>Transducin-like enhancer protein 3</fullName>
    </recommendedName>
    <alternativeName>
        <fullName>Enhancer of split groucho-like protein 3</fullName>
        <shortName>ESG3</shortName>
    </alternativeName>
</protein>
<feature type="chain" id="PRO_0000051280" description="Transducin-like enhancer protein 3">
    <location>
        <begin position="1"/>
        <end position="772"/>
    </location>
</feature>
<feature type="repeat" description="WD 1">
    <location>
        <begin position="484"/>
        <end position="522"/>
    </location>
</feature>
<feature type="repeat" description="WD 2">
    <location>
        <begin position="530"/>
        <end position="569"/>
    </location>
</feature>
<feature type="repeat" description="WD 3">
    <location>
        <begin position="574"/>
        <end position="613"/>
    </location>
</feature>
<feature type="repeat" description="WD 4">
    <location>
        <begin position="616"/>
        <end position="655"/>
    </location>
</feature>
<feature type="repeat" description="WD 5">
    <location>
        <begin position="657"/>
        <end position="696"/>
    </location>
</feature>
<feature type="repeat" description="WD 6">
    <location>
        <begin position="698"/>
        <end position="737"/>
    </location>
</feature>
<feature type="repeat" description="WD 7">
    <location>
        <begin position="739"/>
        <end position="771"/>
    </location>
</feature>
<feature type="region of interest" description="Q domain" evidence="1">
    <location>
        <begin position="1"/>
        <end position="131"/>
    </location>
</feature>
<feature type="region of interest" description="Disordered" evidence="5">
    <location>
        <begin position="130"/>
        <end position="164"/>
    </location>
</feature>
<feature type="region of interest" description="GP domain" evidence="1">
    <location>
        <begin position="132"/>
        <end position="199"/>
    </location>
</feature>
<feature type="region of interest" description="Disordered" evidence="5">
    <location>
        <begin position="185"/>
        <end position="347"/>
    </location>
</feature>
<feature type="region of interest" description="CcN domain" evidence="1">
    <location>
        <begin position="200"/>
        <end position="268"/>
    </location>
</feature>
<feature type="region of interest" description="SP domain" evidence="1">
    <location>
        <begin position="269"/>
        <end position="452"/>
    </location>
</feature>
<feature type="short sequence motif" description="Nuclear localization signal" evidence="4">
    <location>
        <begin position="225"/>
        <end position="228"/>
    </location>
</feature>
<feature type="compositionally biased region" description="Basic and acidic residues" evidence="5">
    <location>
        <begin position="185"/>
        <end position="196"/>
    </location>
</feature>
<feature type="compositionally biased region" description="Low complexity" evidence="5">
    <location>
        <begin position="197"/>
        <end position="207"/>
    </location>
</feature>
<feature type="compositionally biased region" description="Basic and acidic residues" evidence="5">
    <location>
        <begin position="209"/>
        <end position="247"/>
    </location>
</feature>
<feature type="compositionally biased region" description="Basic and acidic residues" evidence="5">
    <location>
        <begin position="272"/>
        <end position="283"/>
    </location>
</feature>
<feature type="compositionally biased region" description="Low complexity" evidence="5">
    <location>
        <begin position="284"/>
        <end position="299"/>
    </location>
</feature>
<feature type="compositionally biased region" description="Basic and acidic residues" evidence="5">
    <location>
        <begin position="300"/>
        <end position="309"/>
    </location>
</feature>
<feature type="compositionally biased region" description="Polar residues" evidence="5">
    <location>
        <begin position="310"/>
        <end position="322"/>
    </location>
</feature>
<feature type="modified residue" description="Phosphoserine" evidence="18 20 22 23 24 25">
    <location>
        <position position="203"/>
    </location>
</feature>
<feature type="modified residue" description="Phosphoserine" evidence="20 25">
    <location>
        <position position="207"/>
    </location>
</feature>
<feature type="modified residue" description="Phosphoserine" evidence="25">
    <location>
        <position position="211"/>
    </location>
</feature>
<feature type="modified residue" description="Phosphoserine" evidence="19">
    <location>
        <position position="217"/>
    </location>
</feature>
<feature type="modified residue" description="N6-acetyllysine" evidence="2">
    <location>
        <position position="232"/>
    </location>
</feature>
<feature type="modified residue" description="Phosphoserine" evidence="24">
    <location>
        <position position="240"/>
    </location>
</feature>
<feature type="modified residue" description="Phosphoserine" evidence="24">
    <location>
        <position position="245"/>
    </location>
</feature>
<feature type="modified residue" description="Phosphothreonine" evidence="20 22 23 24">
    <location>
        <position position="259"/>
    </location>
</feature>
<feature type="modified residue" description="Phosphoserine" evidence="20 23 24 25">
    <location>
        <position position="263"/>
    </location>
</feature>
<feature type="modified residue" description="Phosphoserine" evidence="20 23 24 25">
    <location>
        <position position="267"/>
    </location>
</feature>
<feature type="modified residue" description="N6-acetyllysine" evidence="2">
    <location>
        <position position="275"/>
    </location>
</feature>
<feature type="modified residue" description="Phosphoserine" evidence="18 20 22 24 25">
    <location>
        <position position="286"/>
    </location>
</feature>
<feature type="modified residue" description="Phosphothreonine" evidence="20 25">
    <location>
        <position position="312"/>
    </location>
</feature>
<feature type="modified residue" description="Phosphoserine" evidence="20">
    <location>
        <position position="317"/>
    </location>
</feature>
<feature type="modified residue" description="Phosphothreonine" evidence="20">
    <location>
        <position position="319"/>
    </location>
</feature>
<feature type="modified residue" description="Phosphothreonine" evidence="20">
    <location>
        <position position="321"/>
    </location>
</feature>
<feature type="modified residue" description="Phosphothreonine" evidence="20 22 23 25">
    <location>
        <position position="328"/>
    </location>
</feature>
<feature type="modified residue" description="Phosphothreonine" evidence="18 20 22 23 25">
    <location>
        <position position="334"/>
    </location>
</feature>
<feature type="modified residue" description="Phosphoserine" evidence="20">
    <location>
        <position position="413"/>
    </location>
</feature>
<feature type="cross-link" description="Glycyl lysine isopeptide (Lys-Gly) (interchain with G-Cter in ubiquitin)" evidence="10">
    <location>
        <position position="720"/>
    </location>
</feature>
<feature type="splice variant" id="VSP_007023" description="In isoform 4." evidence="13">
    <original>MYPQGRHP</original>
    <variation>MPPPPPLSCLRGLQ</variation>
    <location>
        <begin position="1"/>
        <end position="8"/>
    </location>
</feature>
<feature type="splice variant" id="VSP_055168" description="In isoform 7." evidence="12">
    <original>MYPQGRHP</original>
    <variation>M</variation>
    <location>
        <begin position="1"/>
        <end position="8"/>
    </location>
</feature>
<feature type="splice variant" id="VSP_007024" description="In isoform 4." evidence="13">
    <location>
        <position position="127"/>
    </location>
</feature>
<feature type="splice variant" id="VSP_006788" description="In isoform 2." evidence="11">
    <location>
        <begin position="342"/>
        <end position="353"/>
    </location>
</feature>
<feature type="splice variant" id="VSP_006789" description="In isoform 3, isoform 5 and isoform 7." evidence="12 13">
    <location>
        <begin position="351"/>
        <end position="353"/>
    </location>
</feature>
<feature type="splice variant" id="VSP_054598" description="In isoform 6." evidence="13">
    <location>
        <begin position="416"/>
        <end position="420"/>
    </location>
</feature>
<feature type="splice variant" id="VSP_006790" description="In isoform 3 and isoform 4." evidence="13">
    <location>
        <begin position="417"/>
        <end position="421"/>
    </location>
</feature>
<feature type="sequence variant" id="VAR_053421" description="In dbSNP:rs1057864." evidence="7">
    <original>A</original>
    <variation>V</variation>
    <location>
        <position position="229"/>
    </location>
</feature>
<feature type="sequence conflict" description="In Ref. 3; BAG60692." evidence="15" ref="3">
    <original>R</original>
    <variation>C</variation>
    <location>
        <position position="358"/>
    </location>
</feature>
<feature type="sequence conflict" description="In Ref. 3; BAG60692." evidence="15" ref="3">
    <original>S</original>
    <variation>G</variation>
    <location>
        <position position="365"/>
    </location>
</feature>
<feature type="sequence conflict" description="In Ref. 5; AAH41831." evidence="15" ref="5">
    <original>A</original>
    <variation>T</variation>
    <location>
        <position position="409"/>
    </location>
</feature>
<feature type="sequence conflict" description="In Ref. 1; AAA61194." evidence="15" ref="1">
    <original>E</original>
    <variation>G</variation>
    <location>
        <position position="487"/>
    </location>
</feature>
<feature type="sequence conflict" description="In Ref. 1; AAA61194." evidence="15" ref="1">
    <original>T</original>
    <variation>S</variation>
    <location>
        <position position="498"/>
    </location>
</feature>
<feature type="sequence conflict" description="In Ref. 1; AAA61194." evidence="15" ref="1">
    <original>I</original>
    <variation>M</variation>
    <location>
        <position position="535"/>
    </location>
</feature>
<feature type="sequence conflict" description="In Ref. 1; AAA61194." evidence="15" ref="1">
    <original>L</original>
    <variation>H</variation>
    <location>
        <position position="541"/>
    </location>
</feature>
<feature type="sequence conflict" description="In Ref. 3; BAG60692." evidence="15" ref="3">
    <original>V</original>
    <variation>E</variation>
    <location>
        <position position="549"/>
    </location>
</feature>
<feature type="sequence conflict" description="In Ref. 1; AAA61194." evidence="15" ref="1">
    <original>A</original>
    <variation>G</variation>
    <location>
        <position position="553"/>
    </location>
</feature>
<feature type="sequence conflict" description="In Ref. 1; AAA61194." evidence="15" ref="1">
    <original>D</original>
    <variation>H</variation>
    <location>
        <position position="692"/>
    </location>
</feature>
<feature type="sequence conflict" description="In Ref. 1; AAA61194." evidence="15" ref="1">
    <original>F</original>
    <variation>S</variation>
    <location>
        <position position="736"/>
    </location>
</feature>
<feature type="modified residue" description="N6-acetyllysine" evidence="21">
    <location sequence="Q04726-3">
        <position position="343"/>
    </location>
</feature>
<feature type="modified residue" description="N6-acetyllysine" evidence="21">
    <location sequence="Q04726-5">
        <position position="343"/>
    </location>
</feature>
<feature type="modified residue" description="N6-acetyllysine" evidence="21">
    <location sequence="Q04726-7">
        <position position="336"/>
    </location>
</feature>
<comment type="function">
    <text evidence="1 10">Transcriptional corepressor that binds to a number of transcription factors (PubMed:28689657). Inhibits the transcriptional activation mediated by CTNNB1 and TCF family members in Wnt signaling (PubMed:28689657). The effects of full-length TLE family members may be modulated by association with dominant-negative AES (By similarity).</text>
</comment>
<comment type="subunit">
    <text evidence="3 6 8 9">Homotetramer and heterooligomer with other family members (PubMed:22304967). Binds LEF1, TCF7 and TCF7L1 (By similarity). Binds FOXA2 (PubMed:10748198). Interacts with TCF7L2/TCF4 (PubMed:22304967). Interacts with TBX18 (via engrailed homology 1 repressor motif), leading to decreased of TBX18 transcriptional activity (PubMed:26235987).</text>
</comment>
<comment type="interaction">
    <interactant intactId="EBI-12014388">
        <id>Q04726-4</id>
    </interactant>
    <interactant intactId="EBI-2555370">
        <id>Q8IWX8</id>
        <label>CHERP</label>
    </interactant>
    <organismsDiffer>false</organismsDiffer>
    <experiments>3</experiments>
</comment>
<comment type="interaction">
    <interactant intactId="EBI-12014388">
        <id>Q04726-4</id>
    </interactant>
    <interactant intactId="EBI-711360">
        <id>P33240</id>
        <label>CSTF2</label>
    </interactant>
    <organismsDiffer>false</organismsDiffer>
    <experiments>3</experiments>
</comment>
<comment type="interaction">
    <interactant intactId="EBI-12014388">
        <id>Q04726-4</id>
    </interactant>
    <interactant intactId="EBI-11992140">
        <id>Q3LI76</id>
        <label>KRTAP15-1</label>
    </interactant>
    <organismsDiffer>false</organismsDiffer>
    <experiments>3</experiments>
</comment>
<comment type="interaction">
    <interactant intactId="EBI-12014388">
        <id>Q04726-4</id>
    </interactant>
    <interactant intactId="EBI-743675">
        <id>Q15475</id>
        <label>SIX1</label>
    </interactant>
    <organismsDiffer>false</organismsDiffer>
    <experiments>3</experiments>
</comment>
<comment type="interaction">
    <interactant intactId="EBI-12014388">
        <id>Q04726-4</id>
    </interactant>
    <interactant intactId="EBI-12695166">
        <id>Q9NPC8</id>
        <label>SIX2</label>
    </interactant>
    <organismsDiffer>false</organismsDiffer>
    <experiments>3</experiments>
</comment>
<comment type="subcellular location">
    <subcellularLocation>
        <location evidence="7 8">Nucleus</location>
    </subcellularLocation>
</comment>
<comment type="alternative products">
    <event type="alternative splicing"/>
    <isoform>
        <id>Q04726-1</id>
        <name>1</name>
        <sequence type="displayed"/>
    </isoform>
    <isoform>
        <id>Q04726-2</id>
        <name>2</name>
        <sequence type="described" ref="VSP_006788"/>
    </isoform>
    <isoform>
        <id>Q04726-3</id>
        <name>3</name>
        <sequence type="described" ref="VSP_006789 VSP_006790"/>
    </isoform>
    <isoform>
        <id>Q04726-4</id>
        <name>4</name>
        <sequence type="described" ref="VSP_007023 VSP_007024 VSP_006790"/>
    </isoform>
    <isoform>
        <id>Q04726-5</id>
        <name>5</name>
        <sequence type="described" ref="VSP_006789"/>
    </isoform>
    <isoform>
        <id>Q04726-6</id>
        <name>6</name>
        <sequence type="described" ref="VSP_054598"/>
    </isoform>
    <isoform>
        <id>Q04726-7</id>
        <name>7</name>
        <sequence type="described" ref="VSP_055168 VSP_006789"/>
    </isoform>
    <text>Experimental confirmation may be lacking for some isoforms.</text>
</comment>
<comment type="tissue specificity">
    <text evidence="7">Placenta and lung.</text>
</comment>
<comment type="domain">
    <text evidence="16">WD repeat Groucho/TLE family members are characterized by 5 regions, a glutamine-rich Q domain, a glycine/proline-rich GP domain, a central CcN domain, containing a nuclear localization signal, and a serine/proline-rich SP domain. The most highly conserved are the N-terminal Q domain and the C-terminal WD-repeat domain.</text>
</comment>
<comment type="PTM">
    <text evidence="8 10">Ubiquitinated by XIAP/BIRC4 (PubMed:22304967). This ubiquitination does not affect its stability, nuclear localization, or capacity to tetramerize but inhibits its interaction with TCF7L2/TCF4 (PubMed:22304967). Ubiquitinated at Lys-720 by UBR5 in response to Wnt signaling, leading to substrate recognition by the segregase p97/VCP and degradation by the proteasome (PubMed:28689657).</text>
</comment>
<comment type="similarity">
    <text evidence="15">Belongs to the WD repeat Groucho/TLE family.</text>
</comment>
<comment type="sequence caution" evidence="15">
    <conflict type="erroneous initiation">
        <sequence resource="EMBL-CDS" id="BAB13373"/>
    </conflict>
</comment>
<keyword id="KW-0007">Acetylation</keyword>
<keyword id="KW-0025">Alternative splicing</keyword>
<keyword id="KW-0903">Direct protein sequencing</keyword>
<keyword id="KW-1017">Isopeptide bond</keyword>
<keyword id="KW-0539">Nucleus</keyword>
<keyword id="KW-0597">Phosphoprotein</keyword>
<keyword id="KW-1267">Proteomics identification</keyword>
<keyword id="KW-1185">Reference proteome</keyword>
<keyword id="KW-0677">Repeat</keyword>
<keyword id="KW-0678">Repressor</keyword>
<keyword id="KW-0804">Transcription</keyword>
<keyword id="KW-0805">Transcription regulation</keyword>
<keyword id="KW-0832">Ubl conjugation</keyword>
<keyword id="KW-0853">WD repeat</keyword>
<keyword id="KW-0879">Wnt signaling pathway</keyword>
<accession>Q04726</accession>
<accession>B4DPT0</accession>
<accession>E9PD64</accession>
<accession>F8W964</accession>
<accession>Q6PI57</accession>
<accession>Q8IVV6</accession>
<accession>Q8WVR2</accession>
<accession>Q9HCM5</accession>
<evidence type="ECO:0000250" key="1">
    <source>
        <dbReference type="UniProtKB" id="Q04724"/>
    </source>
</evidence>
<evidence type="ECO:0000250" key="2">
    <source>
        <dbReference type="UniProtKB" id="Q04727"/>
    </source>
</evidence>
<evidence type="ECO:0000250" key="3">
    <source>
        <dbReference type="UniProtKB" id="Q08122"/>
    </source>
</evidence>
<evidence type="ECO:0000255" key="4"/>
<evidence type="ECO:0000256" key="5">
    <source>
        <dbReference type="SAM" id="MobiDB-lite"/>
    </source>
</evidence>
<evidence type="ECO:0000269" key="6">
    <source>
    </source>
</evidence>
<evidence type="ECO:0000269" key="7">
    <source>
    </source>
</evidence>
<evidence type="ECO:0000269" key="8">
    <source>
    </source>
</evidence>
<evidence type="ECO:0000269" key="9">
    <source>
    </source>
</evidence>
<evidence type="ECO:0000269" key="10">
    <source>
    </source>
</evidence>
<evidence type="ECO:0000303" key="11">
    <source>
    </source>
</evidence>
<evidence type="ECO:0000303" key="12">
    <source>
    </source>
</evidence>
<evidence type="ECO:0000303" key="13">
    <source>
    </source>
</evidence>
<evidence type="ECO:0000303" key="14">
    <source>
    </source>
</evidence>
<evidence type="ECO:0000305" key="15"/>
<evidence type="ECO:0000305" key="16">
    <source>
    </source>
</evidence>
<evidence type="ECO:0000312" key="17">
    <source>
        <dbReference type="HGNC" id="HGNC:11839"/>
    </source>
</evidence>
<evidence type="ECO:0007744" key="18">
    <source>
    </source>
</evidence>
<evidence type="ECO:0007744" key="19">
    <source>
    </source>
</evidence>
<evidence type="ECO:0007744" key="20">
    <source>
    </source>
</evidence>
<evidence type="ECO:0007744" key="21">
    <source>
    </source>
</evidence>
<evidence type="ECO:0007744" key="22">
    <source>
    </source>
</evidence>
<evidence type="ECO:0007744" key="23">
    <source>
    </source>
</evidence>
<evidence type="ECO:0007744" key="24">
    <source>
    </source>
</evidence>
<evidence type="ECO:0007744" key="25">
    <source>
    </source>
</evidence>
<reference key="1">
    <citation type="journal article" date="1992" name="Nat. Genet.">
        <title>Human homologs of a Drosophila enhancer of split gene product define a novel family of nuclear proteins.</title>
        <authorList>
            <person name="Stifani S."/>
            <person name="Blaumueller C.M."/>
            <person name="Redhead N.J."/>
            <person name="Hill R.E."/>
            <person name="Artavanis-Tsakonas S."/>
        </authorList>
    </citation>
    <scope>NUCLEOTIDE SEQUENCE [MRNA] (ISOFORM 1)</scope>
    <scope>SUBCELLULAR LOCATION</scope>
    <scope>TISSUE SPECIFICITY</scope>
    <scope>VARIANT VAL-229</scope>
    <source>
        <tissue>Fetal brain</tissue>
    </source>
</reference>
<reference key="2">
    <citation type="journal article" date="2000" name="DNA Res.">
        <title>Prediction of the coding sequences of unidentified human genes. XVIII. The complete sequences of 100 new cDNA clones from brain which code for large proteins in vitro.</title>
        <authorList>
            <person name="Nagase T."/>
            <person name="Kikuno R."/>
            <person name="Nakayama M."/>
            <person name="Hirosawa M."/>
            <person name="Ohara O."/>
        </authorList>
    </citation>
    <scope>NUCLEOTIDE SEQUENCE [LARGE SCALE MRNA] (ISOFORM 2)</scope>
    <source>
        <tissue>Brain</tissue>
    </source>
</reference>
<reference key="3">
    <citation type="journal article" date="2004" name="Nat. Genet.">
        <title>Complete sequencing and characterization of 21,243 full-length human cDNAs.</title>
        <authorList>
            <person name="Ota T."/>
            <person name="Suzuki Y."/>
            <person name="Nishikawa T."/>
            <person name="Otsuki T."/>
            <person name="Sugiyama T."/>
            <person name="Irie R."/>
            <person name="Wakamatsu A."/>
            <person name="Hayashi K."/>
            <person name="Sato H."/>
            <person name="Nagai K."/>
            <person name="Kimura K."/>
            <person name="Makita H."/>
            <person name="Sekine M."/>
            <person name="Obayashi M."/>
            <person name="Nishi T."/>
            <person name="Shibahara T."/>
            <person name="Tanaka T."/>
            <person name="Ishii S."/>
            <person name="Yamamoto J."/>
            <person name="Saito K."/>
            <person name="Kawai Y."/>
            <person name="Isono Y."/>
            <person name="Nakamura Y."/>
            <person name="Nagahari K."/>
            <person name="Murakami K."/>
            <person name="Yasuda T."/>
            <person name="Iwayanagi T."/>
            <person name="Wagatsuma M."/>
            <person name="Shiratori A."/>
            <person name="Sudo H."/>
            <person name="Hosoiri T."/>
            <person name="Kaku Y."/>
            <person name="Kodaira H."/>
            <person name="Kondo H."/>
            <person name="Sugawara M."/>
            <person name="Takahashi M."/>
            <person name="Kanda K."/>
            <person name="Yokoi T."/>
            <person name="Furuya T."/>
            <person name="Kikkawa E."/>
            <person name="Omura Y."/>
            <person name="Abe K."/>
            <person name="Kamihara K."/>
            <person name="Katsuta N."/>
            <person name="Sato K."/>
            <person name="Tanikawa M."/>
            <person name="Yamazaki M."/>
            <person name="Ninomiya K."/>
            <person name="Ishibashi T."/>
            <person name="Yamashita H."/>
            <person name="Murakawa K."/>
            <person name="Fujimori K."/>
            <person name="Tanai H."/>
            <person name="Kimata M."/>
            <person name="Watanabe M."/>
            <person name="Hiraoka S."/>
            <person name="Chiba Y."/>
            <person name="Ishida S."/>
            <person name="Ono Y."/>
            <person name="Takiguchi S."/>
            <person name="Watanabe S."/>
            <person name="Yosida M."/>
            <person name="Hotuta T."/>
            <person name="Kusano J."/>
            <person name="Kanehori K."/>
            <person name="Takahashi-Fujii A."/>
            <person name="Hara H."/>
            <person name="Tanase T.-O."/>
            <person name="Nomura Y."/>
            <person name="Togiya S."/>
            <person name="Komai F."/>
            <person name="Hara R."/>
            <person name="Takeuchi K."/>
            <person name="Arita M."/>
            <person name="Imose N."/>
            <person name="Musashino K."/>
            <person name="Yuuki H."/>
            <person name="Oshima A."/>
            <person name="Sasaki N."/>
            <person name="Aotsuka S."/>
            <person name="Yoshikawa Y."/>
            <person name="Matsunawa H."/>
            <person name="Ichihara T."/>
            <person name="Shiohata N."/>
            <person name="Sano S."/>
            <person name="Moriya S."/>
            <person name="Momiyama H."/>
            <person name="Satoh N."/>
            <person name="Takami S."/>
            <person name="Terashima Y."/>
            <person name="Suzuki O."/>
            <person name="Nakagawa S."/>
            <person name="Senoh A."/>
            <person name="Mizoguchi H."/>
            <person name="Goto Y."/>
            <person name="Shimizu F."/>
            <person name="Wakebe H."/>
            <person name="Hishigaki H."/>
            <person name="Watanabe T."/>
            <person name="Sugiyama A."/>
            <person name="Takemoto M."/>
            <person name="Kawakami B."/>
            <person name="Yamazaki M."/>
            <person name="Watanabe K."/>
            <person name="Kumagai A."/>
            <person name="Itakura S."/>
            <person name="Fukuzumi Y."/>
            <person name="Fujimori Y."/>
            <person name="Komiyama M."/>
            <person name="Tashiro H."/>
            <person name="Tanigami A."/>
            <person name="Fujiwara T."/>
            <person name="Ono T."/>
            <person name="Yamada K."/>
            <person name="Fujii Y."/>
            <person name="Ozaki K."/>
            <person name="Hirao M."/>
            <person name="Ohmori Y."/>
            <person name="Kawabata A."/>
            <person name="Hikiji T."/>
            <person name="Kobatake N."/>
            <person name="Inagaki H."/>
            <person name="Ikema Y."/>
            <person name="Okamoto S."/>
            <person name="Okitani R."/>
            <person name="Kawakami T."/>
            <person name="Noguchi S."/>
            <person name="Itoh T."/>
            <person name="Shigeta K."/>
            <person name="Senba T."/>
            <person name="Matsumura K."/>
            <person name="Nakajima Y."/>
            <person name="Mizuno T."/>
            <person name="Morinaga M."/>
            <person name="Sasaki M."/>
            <person name="Togashi T."/>
            <person name="Oyama M."/>
            <person name="Hata H."/>
            <person name="Watanabe M."/>
            <person name="Komatsu T."/>
            <person name="Mizushima-Sugano J."/>
            <person name="Satoh T."/>
            <person name="Shirai Y."/>
            <person name="Takahashi Y."/>
            <person name="Nakagawa K."/>
            <person name="Okumura K."/>
            <person name="Nagase T."/>
            <person name="Nomura N."/>
            <person name="Kikuchi H."/>
            <person name="Masuho Y."/>
            <person name="Yamashita R."/>
            <person name="Nakai K."/>
            <person name="Yada T."/>
            <person name="Nakamura Y."/>
            <person name="Ohara O."/>
            <person name="Isogai T."/>
            <person name="Sugano S."/>
        </authorList>
    </citation>
    <scope>NUCLEOTIDE SEQUENCE [LARGE SCALE MRNA] (ISOFORMS 5 AND 7)</scope>
    <source>
        <tissue>Trachea</tissue>
    </source>
</reference>
<reference key="4">
    <citation type="journal article" date="2006" name="Nature">
        <title>Analysis of the DNA sequence and duplication history of human chromosome 15.</title>
        <authorList>
            <person name="Zody M.C."/>
            <person name="Garber M."/>
            <person name="Sharpe T."/>
            <person name="Young S.K."/>
            <person name="Rowen L."/>
            <person name="O'Neill K."/>
            <person name="Whittaker C.A."/>
            <person name="Kamal M."/>
            <person name="Chang J.L."/>
            <person name="Cuomo C.A."/>
            <person name="Dewar K."/>
            <person name="FitzGerald M.G."/>
            <person name="Kodira C.D."/>
            <person name="Madan A."/>
            <person name="Qin S."/>
            <person name="Yang X."/>
            <person name="Abbasi N."/>
            <person name="Abouelleil A."/>
            <person name="Arachchi H.M."/>
            <person name="Baradarani L."/>
            <person name="Birditt B."/>
            <person name="Bloom S."/>
            <person name="Bloom T."/>
            <person name="Borowsky M.L."/>
            <person name="Burke J."/>
            <person name="Butler J."/>
            <person name="Cook A."/>
            <person name="DeArellano K."/>
            <person name="DeCaprio D."/>
            <person name="Dorris L. III"/>
            <person name="Dors M."/>
            <person name="Eichler E.E."/>
            <person name="Engels R."/>
            <person name="Fahey J."/>
            <person name="Fleetwood P."/>
            <person name="Friedman C."/>
            <person name="Gearin G."/>
            <person name="Hall J.L."/>
            <person name="Hensley G."/>
            <person name="Johnson E."/>
            <person name="Jones C."/>
            <person name="Kamat A."/>
            <person name="Kaur A."/>
            <person name="Locke D.P."/>
            <person name="Madan A."/>
            <person name="Munson G."/>
            <person name="Jaffe D.B."/>
            <person name="Lui A."/>
            <person name="Macdonald P."/>
            <person name="Mauceli E."/>
            <person name="Naylor J.W."/>
            <person name="Nesbitt R."/>
            <person name="Nicol R."/>
            <person name="O'Leary S.B."/>
            <person name="Ratcliffe A."/>
            <person name="Rounsley S."/>
            <person name="She X."/>
            <person name="Sneddon K.M.B."/>
            <person name="Stewart S."/>
            <person name="Sougnez C."/>
            <person name="Stone S.M."/>
            <person name="Topham K."/>
            <person name="Vincent D."/>
            <person name="Wang S."/>
            <person name="Zimmer A.R."/>
            <person name="Birren B.W."/>
            <person name="Hood L."/>
            <person name="Lander E.S."/>
            <person name="Nusbaum C."/>
        </authorList>
    </citation>
    <scope>NUCLEOTIDE SEQUENCE [LARGE SCALE GENOMIC DNA]</scope>
</reference>
<reference key="5">
    <citation type="journal article" date="2004" name="Genome Res.">
        <title>The status, quality, and expansion of the NIH full-length cDNA project: the Mammalian Gene Collection (MGC).</title>
        <authorList>
            <consortium name="The MGC Project Team"/>
        </authorList>
    </citation>
    <scope>NUCLEOTIDE SEQUENCE [LARGE SCALE MRNA] (ISOFORMS 3; 4 AND 6)</scope>
    <source>
        <tissue>Pancreas</tissue>
        <tissue>Testis</tissue>
    </source>
</reference>
<reference key="6">
    <citation type="journal article" date="2000" name="J. Biol. Chem.">
        <title>Transducin-like enhancer of split proteins, the human homologs of Drosophila groucho, interact with hepatic nuclear factor 3beta.</title>
        <authorList>
            <person name="Wang J.-C."/>
            <person name="Waltner-Law M."/>
            <person name="Yamada K."/>
            <person name="Osawa H."/>
            <person name="Stifani S."/>
            <person name="Granner D.K."/>
        </authorList>
    </citation>
    <scope>PROTEIN SEQUENCE OF 324-338 AND 521-531</scope>
    <scope>INTERACTION WITH FOXA2</scope>
</reference>
<reference key="7">
    <citation type="journal article" date="2006" name="Cell">
        <title>Global, in vivo, and site-specific phosphorylation dynamics in signaling networks.</title>
        <authorList>
            <person name="Olsen J.V."/>
            <person name="Blagoev B."/>
            <person name="Gnad F."/>
            <person name="Macek B."/>
            <person name="Kumar C."/>
            <person name="Mortensen P."/>
            <person name="Mann M."/>
        </authorList>
    </citation>
    <scope>PHOSPHORYLATION [LARGE SCALE ANALYSIS] AT SER-217</scope>
    <scope>IDENTIFICATION BY MASS SPECTROMETRY [LARGE SCALE ANALYSIS]</scope>
    <source>
        <tissue>Cervix carcinoma</tissue>
    </source>
</reference>
<reference key="8">
    <citation type="journal article" date="2006" name="Nat. Biotechnol.">
        <title>A probability-based approach for high-throughput protein phosphorylation analysis and site localization.</title>
        <authorList>
            <person name="Beausoleil S.A."/>
            <person name="Villen J."/>
            <person name="Gerber S.A."/>
            <person name="Rush J."/>
            <person name="Gygi S.P."/>
        </authorList>
    </citation>
    <scope>PHOSPHORYLATION [LARGE SCALE ANALYSIS] AT SER-203; SER-286 AND THR-334</scope>
    <scope>IDENTIFICATION BY MASS SPECTROMETRY [LARGE SCALE ANALYSIS]</scope>
    <source>
        <tissue>Cervix carcinoma</tissue>
    </source>
</reference>
<reference key="9">
    <citation type="journal article" date="2008" name="Genome Biol.">
        <title>The Groucho/TLE/Grg family of transcriptional co-repressors.</title>
        <authorList>
            <person name="Jennings B.H."/>
            <person name="Ish-Horowicz D."/>
        </authorList>
    </citation>
    <scope>REVIEW</scope>
</reference>
<reference key="10">
    <citation type="journal article" date="2008" name="J. Proteome Res.">
        <title>Combining protein-based IMAC, peptide-based IMAC, and MudPIT for efficient phosphoproteomic analysis.</title>
        <authorList>
            <person name="Cantin G.T."/>
            <person name="Yi W."/>
            <person name="Lu B."/>
            <person name="Park S.K."/>
            <person name="Xu T."/>
            <person name="Lee J.-D."/>
            <person name="Yates J.R. III"/>
        </authorList>
    </citation>
    <scope>IDENTIFICATION BY MASS SPECTROMETRY [LARGE SCALE ANALYSIS]</scope>
    <source>
        <tissue>Cervix carcinoma</tissue>
    </source>
</reference>
<reference key="11">
    <citation type="journal article" date="2008" name="Proc. Natl. Acad. Sci. U.S.A.">
        <title>A quantitative atlas of mitotic phosphorylation.</title>
        <authorList>
            <person name="Dephoure N."/>
            <person name="Zhou C."/>
            <person name="Villen J."/>
            <person name="Beausoleil S.A."/>
            <person name="Bakalarski C.E."/>
            <person name="Elledge S.J."/>
            <person name="Gygi S.P."/>
        </authorList>
    </citation>
    <scope>PHOSPHORYLATION [LARGE SCALE ANALYSIS] AT SER-203; SER-207; THR-259; SER-263; SER-267; SER-286; THR-312; SER-317; THR-319; THR-321; THR-328; THR-334 AND SER-413</scope>
    <scope>IDENTIFICATION BY MASS SPECTROMETRY [LARGE SCALE ANALYSIS]</scope>
    <source>
        <tissue>Cervix carcinoma</tissue>
    </source>
</reference>
<reference key="12">
    <citation type="journal article" date="2009" name="Anal. Chem.">
        <title>Lys-N and trypsin cover complementary parts of the phosphoproteome in a refined SCX-based approach.</title>
        <authorList>
            <person name="Gauci S."/>
            <person name="Helbig A.O."/>
            <person name="Slijper M."/>
            <person name="Krijgsveld J."/>
            <person name="Heck A.J."/>
            <person name="Mohammed S."/>
        </authorList>
    </citation>
    <scope>IDENTIFICATION BY MASS SPECTROMETRY [LARGE SCALE ANALYSIS]</scope>
</reference>
<reference key="13">
    <citation type="journal article" date="2009" name="Mol. Cell. Proteomics">
        <title>Large-scale proteomics analysis of the human kinome.</title>
        <authorList>
            <person name="Oppermann F.S."/>
            <person name="Gnad F."/>
            <person name="Olsen J.V."/>
            <person name="Hornberger R."/>
            <person name="Greff Z."/>
            <person name="Keri G."/>
            <person name="Mann M."/>
            <person name="Daub H."/>
        </authorList>
    </citation>
    <scope>IDENTIFICATION BY MASS SPECTROMETRY [LARGE SCALE ANALYSIS]</scope>
</reference>
<reference key="14">
    <citation type="journal article" date="2009" name="Sci. Signal.">
        <title>Quantitative phosphoproteomic analysis of T cell receptor signaling reveals system-wide modulation of protein-protein interactions.</title>
        <authorList>
            <person name="Mayya V."/>
            <person name="Lundgren D.H."/>
            <person name="Hwang S.-I."/>
            <person name="Rezaul K."/>
            <person name="Wu L."/>
            <person name="Eng J.K."/>
            <person name="Rodionov V."/>
            <person name="Han D.K."/>
        </authorList>
    </citation>
    <scope>PHOSPHORYLATION [LARGE SCALE ANALYSIS] AT SER-203; THR-259; SER-286; THR-328 AND THR-334</scope>
    <scope>IDENTIFICATION BY MASS SPECTROMETRY [LARGE SCALE ANALYSIS]</scope>
    <source>
        <tissue>Leukemic T-cell</tissue>
    </source>
</reference>
<reference key="15">
    <citation type="journal article" date="2009" name="Science">
        <title>Lysine acetylation targets protein complexes and co-regulates major cellular functions.</title>
        <authorList>
            <person name="Choudhary C."/>
            <person name="Kumar C."/>
            <person name="Gnad F."/>
            <person name="Nielsen M.L."/>
            <person name="Rehman M."/>
            <person name="Walther T.C."/>
            <person name="Olsen J.V."/>
            <person name="Mann M."/>
        </authorList>
    </citation>
    <scope>ACETYLATION [LARGE SCALE ANALYSIS] AT LYS-343 (ISOFORMS 3 AND 5)</scope>
    <scope>ACETYLATION [LARGE SCALE ANALYSIS] AT LYS-336 (ISOFORM 7)</scope>
    <scope>IDENTIFICATION BY MASS SPECTROMETRY [LARGE SCALE ANALYSIS]</scope>
</reference>
<reference key="16">
    <citation type="journal article" date="2010" name="Sci. Signal.">
        <title>Quantitative phosphoproteomics reveals widespread full phosphorylation site occupancy during mitosis.</title>
        <authorList>
            <person name="Olsen J.V."/>
            <person name="Vermeulen M."/>
            <person name="Santamaria A."/>
            <person name="Kumar C."/>
            <person name="Miller M.L."/>
            <person name="Jensen L.J."/>
            <person name="Gnad F."/>
            <person name="Cox J."/>
            <person name="Jensen T.S."/>
            <person name="Nigg E.A."/>
            <person name="Brunak S."/>
            <person name="Mann M."/>
        </authorList>
    </citation>
    <scope>PHOSPHORYLATION [LARGE SCALE ANALYSIS] AT SER-203; THR-259; SER-263; SER-267; THR-328 AND THR-334</scope>
    <scope>IDENTIFICATION BY MASS SPECTROMETRY [LARGE SCALE ANALYSIS]</scope>
    <source>
        <tissue>Cervix carcinoma</tissue>
    </source>
</reference>
<reference key="17">
    <citation type="journal article" date="2011" name="BMC Syst. Biol.">
        <title>Initial characterization of the human central proteome.</title>
        <authorList>
            <person name="Burkard T.R."/>
            <person name="Planyavsky M."/>
            <person name="Kaupe I."/>
            <person name="Breitwieser F.P."/>
            <person name="Buerckstuemmer T."/>
            <person name="Bennett K.L."/>
            <person name="Superti-Furga G."/>
            <person name="Colinge J."/>
        </authorList>
    </citation>
    <scope>IDENTIFICATION BY MASS SPECTROMETRY [LARGE SCALE ANALYSIS]</scope>
</reference>
<reference key="18">
    <citation type="journal article" date="2011" name="Sci. Signal.">
        <title>System-wide temporal characterization of the proteome and phosphoproteome of human embryonic stem cell differentiation.</title>
        <authorList>
            <person name="Rigbolt K.T."/>
            <person name="Prokhorova T.A."/>
            <person name="Akimov V."/>
            <person name="Henningsen J."/>
            <person name="Johansen P.T."/>
            <person name="Kratchmarova I."/>
            <person name="Kassem M."/>
            <person name="Mann M."/>
            <person name="Olsen J.V."/>
            <person name="Blagoev B."/>
        </authorList>
    </citation>
    <scope>PHOSPHORYLATION [LARGE SCALE ANALYSIS] AT SER-203; SER-240; SER-245; THR-259; SER-263; SER-267 AND SER-286</scope>
    <scope>IDENTIFICATION BY MASS SPECTROMETRY [LARGE SCALE ANALYSIS]</scope>
</reference>
<reference key="19">
    <citation type="journal article" date="2012" name="Mol. Cell">
        <title>XIAP monoubiquitylates Groucho/TLE to promote canonical Wnt signaling.</title>
        <authorList>
            <person name="Hanson A.J."/>
            <person name="Wallace H.A."/>
            <person name="Freeman T.J."/>
            <person name="Beauchamp R.D."/>
            <person name="Lee L.A."/>
            <person name="Lee E."/>
        </authorList>
    </citation>
    <scope>SUBUNIT</scope>
    <scope>SUBCELLULAR LOCATION</scope>
    <scope>UBIQUITINATION BY XIAP/BIRC4</scope>
    <scope>INTERACTION WITH TCF7L2/TCF4</scope>
</reference>
<reference key="20">
    <citation type="journal article" date="2013" name="J. Proteome Res.">
        <title>Toward a comprehensive characterization of a human cancer cell phosphoproteome.</title>
        <authorList>
            <person name="Zhou H."/>
            <person name="Di Palma S."/>
            <person name="Preisinger C."/>
            <person name="Peng M."/>
            <person name="Polat A.N."/>
            <person name="Heck A.J."/>
            <person name="Mohammed S."/>
        </authorList>
    </citation>
    <scope>PHOSPHORYLATION [LARGE SCALE ANALYSIS] AT SER-203; SER-207; SER-211; SER-263; SER-267; SER-286; THR-312; THR-328 AND THR-334</scope>
    <scope>IDENTIFICATION BY MASS SPECTROMETRY [LARGE SCALE ANALYSIS]</scope>
    <source>
        <tissue>Cervix carcinoma</tissue>
        <tissue>Erythroleukemia</tissue>
    </source>
</reference>
<reference key="21">
    <citation type="journal article" date="2014" name="J. Proteomics">
        <title>An enzyme assisted RP-RPLC approach for in-depth analysis of human liver phosphoproteome.</title>
        <authorList>
            <person name="Bian Y."/>
            <person name="Song C."/>
            <person name="Cheng K."/>
            <person name="Dong M."/>
            <person name="Wang F."/>
            <person name="Huang J."/>
            <person name="Sun D."/>
            <person name="Wang L."/>
            <person name="Ye M."/>
            <person name="Zou H."/>
        </authorList>
    </citation>
    <scope>IDENTIFICATION BY MASS SPECTROMETRY [LARGE SCALE ANALYSIS]</scope>
    <source>
        <tissue>Liver</tissue>
    </source>
</reference>
<reference key="22">
    <citation type="journal article" date="2015" name="Am. J. Hum. Genet.">
        <title>Mutations in TBX18 cause dominant urinary tract malformations via transcriptional dysregulation of ureter development.</title>
        <authorList>
            <person name="Vivante A."/>
            <person name="Kleppa M.J."/>
            <person name="Schulz J."/>
            <person name="Kohl S."/>
            <person name="Sharma A."/>
            <person name="Chen J."/>
            <person name="Shril S."/>
            <person name="Hwang D.Y."/>
            <person name="Weiss A.C."/>
            <person name="Kaminski M.M."/>
            <person name="Shukrun R."/>
            <person name="Kemper M.J."/>
            <person name="Lehnhardt A."/>
            <person name="Beetz R."/>
            <person name="Sanna-Cherchi S."/>
            <person name="Verbitsky M."/>
            <person name="Gharavi A.G."/>
            <person name="Stuart H.M."/>
            <person name="Feather S.A."/>
            <person name="Goodship J.A."/>
            <person name="Goodship T.H."/>
            <person name="Woolf A.S."/>
            <person name="Westra S.J."/>
            <person name="Doody D.P."/>
            <person name="Bauer S.B."/>
            <person name="Lee R.S."/>
            <person name="Adam R.M."/>
            <person name="Lu W."/>
            <person name="Reutter H.M."/>
            <person name="Kehinde E.O."/>
            <person name="Mancini E.J."/>
            <person name="Lifton R.P."/>
            <person name="Tasic V."/>
            <person name="Lienkamp S.S."/>
            <person name="Jueppner H."/>
            <person name="Kispert A."/>
            <person name="Hildebrandt F."/>
        </authorList>
    </citation>
    <scope>INTERACTION WITH TBX18</scope>
</reference>
<reference key="23">
    <citation type="journal article" date="2017" name="Mol. Cell">
        <title>Wnt-dependent inactivation of the Groucho/TLE co-repressor by the HECT E3 ubiquitin ligase Hyd/UBR5.</title>
        <authorList>
            <person name="Flack J.E."/>
            <person name="Mieszczanek J."/>
            <person name="Novcic N."/>
            <person name="Bienz M."/>
        </authorList>
    </citation>
    <scope>FUNCTION</scope>
    <scope>UBIQUITINATION AT LYS-720</scope>
</reference>
<gene>
    <name evidence="14 17" type="primary">TLE3</name>
    <name type="synonym">KIAA1547</name>
</gene>